<evidence type="ECO:0000250" key="1"/>
<evidence type="ECO:0000255" key="2"/>
<evidence type="ECO:0000305" key="3"/>
<organismHost>
    <name type="scientific">Camelus dromedarius</name>
    <name type="common">Dromedary</name>
    <name type="synonym">Arabian camel</name>
    <dbReference type="NCBI Taxonomy" id="9838"/>
</organismHost>
<organismHost>
    <name type="scientific">Canis lupus familiaris</name>
    <name type="common">Dog</name>
    <name type="synonym">Canis familiaris</name>
    <dbReference type="NCBI Taxonomy" id="9615"/>
</organismHost>
<organismHost>
    <name type="scientific">Equus asinus</name>
    <name type="common">Donkey</name>
    <name type="synonym">Equus africanus asinus</name>
    <dbReference type="NCBI Taxonomy" id="9793"/>
</organismHost>
<organismHost>
    <name type="scientific">Equus caballus</name>
    <name type="common">Horse</name>
    <dbReference type="NCBI Taxonomy" id="9796"/>
</organismHost>
<organismHost>
    <name type="scientific">Equus hemionus</name>
    <name type="common">Onager</name>
    <name type="synonym">Asian wild ass</name>
    <dbReference type="NCBI Taxonomy" id="9794"/>
</organismHost>
<organismHost>
    <name type="scientific">Equus quagga burchellii</name>
    <name type="common">Burchell's zebra</name>
    <name type="synonym">Equus burchelli</name>
    <dbReference type="NCBI Taxonomy" id="89252"/>
</organismHost>
<organismHost>
    <name type="scientific">Loxodonta africana</name>
    <name type="common">African elephant</name>
    <dbReference type="NCBI Taxonomy" id="9785"/>
</organismHost>
<name>VP7_AHSV9</name>
<gene>
    <name type="primary">Segment-7</name>
</gene>
<reference key="1">
    <citation type="journal article" date="1993" name="J. Virol. Methods">
        <title>The use of African horse sickness virus VP7 antigen, synthesised in bacteria, and anti-VP7 monoclonal antibodies in a competitive ELISA.</title>
        <authorList>
            <person name="Wade-Evans A.M."/>
            <person name="Woolhouse T."/>
            <person name="O'Hara R."/>
            <person name="Hamblin C."/>
        </authorList>
    </citation>
    <scope>NUCLEOTIDE SEQUENCE [GENOMIC RNA]</scope>
</reference>
<reference key="2">
    <citation type="journal article" date="1998" name="J. Gen. Virol.">
        <title>Intracellular production of African horsesickness virus core-like particles by expression of the two major core proteins, VP3 and VP7, in insect cells.</title>
        <authorList>
            <person name="Maree S."/>
            <person name="Durbach S."/>
            <person name="Huismans H."/>
        </authorList>
    </citation>
    <scope>NUCLEOTIDE SEQUENCE [GENOMIC RNA]</scope>
</reference>
<dbReference type="EMBL" id="S69829">
    <property type="protein sequence ID" value="AAB29954.1"/>
    <property type="molecule type" value="Genomic_RNA"/>
</dbReference>
<dbReference type="EMBL" id="U90337">
    <property type="protein sequence ID" value="AAC04609.1"/>
    <property type="molecule type" value="Genomic_RNA"/>
</dbReference>
<dbReference type="SMR" id="Q86729"/>
<dbReference type="GlyCosmos" id="Q86729">
    <property type="glycosylation" value="1 site, No reported glycans"/>
</dbReference>
<dbReference type="GO" id="GO:0019031">
    <property type="term" value="C:viral envelope"/>
    <property type="evidence" value="ECO:0007669"/>
    <property type="project" value="InterPro"/>
</dbReference>
<dbReference type="GO" id="GO:0039624">
    <property type="term" value="C:viral outer capsid"/>
    <property type="evidence" value="ECO:0007669"/>
    <property type="project" value="UniProtKB-KW"/>
</dbReference>
<dbReference type="GO" id="GO:0046789">
    <property type="term" value="F:host cell surface receptor binding"/>
    <property type="evidence" value="ECO:0007669"/>
    <property type="project" value="InterPro"/>
</dbReference>
<dbReference type="GO" id="GO:0005198">
    <property type="term" value="F:structural molecule activity"/>
    <property type="evidence" value="ECO:0007669"/>
    <property type="project" value="InterPro"/>
</dbReference>
<dbReference type="GO" id="GO:0019064">
    <property type="term" value="P:fusion of virus membrane with host plasma membrane"/>
    <property type="evidence" value="ECO:0007669"/>
    <property type="project" value="InterPro"/>
</dbReference>
<dbReference type="Gene3D" id="2.60.120.170">
    <property type="match status" value="1"/>
</dbReference>
<dbReference type="Gene3D" id="1.10.250.10">
    <property type="entry name" value="Bluetongue Virus 10, subunit 1, domain 1"/>
    <property type="match status" value="1"/>
</dbReference>
<dbReference type="Gene3D" id="1.10.170.10">
    <property type="entry name" value="Bluetongue Virus 10, subunit 1, domain 3"/>
    <property type="match status" value="1"/>
</dbReference>
<dbReference type="InterPro" id="IPR008980">
    <property type="entry name" value="Capsid_hemagglutn"/>
</dbReference>
<dbReference type="InterPro" id="IPR001803">
    <property type="entry name" value="Orbi_VP7_capsid"/>
</dbReference>
<dbReference type="InterPro" id="IPR023178">
    <property type="entry name" value="Orbi_VP7_capsid_C"/>
</dbReference>
<dbReference type="InterPro" id="IPR023176">
    <property type="entry name" value="Orbi_VP7_capsid_N"/>
</dbReference>
<dbReference type="InterPro" id="IPR008935">
    <property type="entry name" value="Virus_capsid_a-hlx_vir"/>
</dbReference>
<dbReference type="Pfam" id="PF00897">
    <property type="entry name" value="Orbi_VP7"/>
    <property type="match status" value="1"/>
</dbReference>
<dbReference type="PRINTS" id="PR00903">
    <property type="entry name" value="VP7CAPSID"/>
</dbReference>
<dbReference type="SUPFAM" id="SSF48345">
    <property type="entry name" value="A virus capsid protein alpha-helical domain"/>
    <property type="match status" value="1"/>
</dbReference>
<dbReference type="SUPFAM" id="SSF49818">
    <property type="entry name" value="Viral protein domain"/>
    <property type="match status" value="1"/>
</dbReference>
<organism>
    <name type="scientific">African horse sickness virus 9</name>
    <name type="common">AHSV-9</name>
    <dbReference type="NCBI Taxonomy" id="10897"/>
    <lineage>
        <taxon>Viruses</taxon>
        <taxon>Riboviria</taxon>
        <taxon>Orthornavirae</taxon>
        <taxon>Duplornaviricota</taxon>
        <taxon>Resentoviricetes</taxon>
        <taxon>Reovirales</taxon>
        <taxon>Sedoreoviridae</taxon>
        <taxon>Orbivirus</taxon>
        <taxon>African horse sickness virus</taxon>
    </lineage>
</organism>
<keyword id="KW-0167">Capsid protein</keyword>
<keyword id="KW-0325">Glycoprotein</keyword>
<keyword id="KW-1152">Outer capsid protein</keyword>
<keyword id="KW-0946">Virion</keyword>
<sequence length="349" mass="37814">MDAIAARALSVVRACVTVTDARVSLDPGVMETLGIAINRYNGLTNHSVSMRPQTQAERNEMFFMCTDMVLAALNVQIGNVSPDYDQALATVGALATTEIPYNVQAMNDIVRITGQMQTFGPSKVQTGPYAGAVEVQQSGRYYVPQGRTRGGYINSNIAEVCMDAGAAGQVNALLAPRRGDAVMIYFVWRPLRIFCDPQGASLESAPGTFVTVDGVNVAAGDVVAWNTIAPVNVGNPGARRSILQFEVLWYTSLDRSLDTVPELAPTLTRCYAYVSPTWHALRAVIFQQMNMQPINPPIFPPTERNEIVAYLLVASLADVYAALRPDFRMNGVVAPVGQINRALVLAAYH</sequence>
<proteinExistence type="inferred from homology"/>
<protein>
    <recommendedName>
        <fullName>Core protein VP7</fullName>
    </recommendedName>
    <alternativeName>
        <fullName>Capsid protein VP7</fullName>
    </alternativeName>
    <alternativeName>
        <fullName>VP7 antigen</fullName>
    </alternativeName>
</protein>
<comment type="function">
    <text>Major structural core protein; binds to structural protein VP3. Constitutes the surface of the AHSV core.</text>
</comment>
<comment type="subunit">
    <text evidence="1">Homotrimer.</text>
</comment>
<comment type="subcellular location">
    <subcellularLocation>
        <location evidence="3">Virion</location>
    </subcellularLocation>
</comment>
<comment type="similarity">
    <text evidence="3">Belongs to the orbivirus VP7 family.</text>
</comment>
<accession>Q86729</accession>
<accession>O11856</accession>
<feature type="chain" id="PRO_0000222738" description="Core protein VP7">
    <location>
        <begin position="1"/>
        <end position="349"/>
    </location>
</feature>
<feature type="glycosylation site" description="N-linked (GlcNAc...) asparagine; by host" evidence="2">
    <location>
        <position position="45"/>
    </location>
</feature>
<feature type="sequence conflict" description="In Ref. 2; AAC04609." evidence="3" ref="2">
    <original>A</original>
    <variation>R</variation>
    <location>
        <position position="5"/>
    </location>
</feature>
<feature type="sequence conflict" description="In Ref. 2; AAC04609." evidence="3" ref="2">
    <original>V</original>
    <variation>I</variation>
    <location>
        <position position="80"/>
    </location>
</feature>